<organism>
    <name type="scientific">Streptomyces griseus subsp. griseus (strain JCM 4626 / CBS 651.72 / NBRC 13350 / KCC S-0626 / ISP 5235)</name>
    <dbReference type="NCBI Taxonomy" id="455632"/>
    <lineage>
        <taxon>Bacteria</taxon>
        <taxon>Bacillati</taxon>
        <taxon>Actinomycetota</taxon>
        <taxon>Actinomycetes</taxon>
        <taxon>Kitasatosporales</taxon>
        <taxon>Streptomycetaceae</taxon>
        <taxon>Streptomyces</taxon>
    </lineage>
</organism>
<dbReference type="EMBL" id="AP009493">
    <property type="protein sequence ID" value="BAG20263.1"/>
    <property type="molecule type" value="Genomic_DNA"/>
</dbReference>
<dbReference type="RefSeq" id="WP_003967578.1">
    <property type="nucleotide sequence ID" value="NC_010572.1"/>
</dbReference>
<dbReference type="SMR" id="B1VMF3"/>
<dbReference type="KEGG" id="sgr:SGR_3434"/>
<dbReference type="eggNOG" id="COG0443">
    <property type="taxonomic scope" value="Bacteria"/>
</dbReference>
<dbReference type="HOGENOM" id="CLU_005965_2_4_11"/>
<dbReference type="Proteomes" id="UP000001685">
    <property type="component" value="Chromosome"/>
</dbReference>
<dbReference type="GO" id="GO:0005524">
    <property type="term" value="F:ATP binding"/>
    <property type="evidence" value="ECO:0007669"/>
    <property type="project" value="UniProtKB-UniRule"/>
</dbReference>
<dbReference type="GO" id="GO:0140662">
    <property type="term" value="F:ATP-dependent protein folding chaperone"/>
    <property type="evidence" value="ECO:0007669"/>
    <property type="project" value="InterPro"/>
</dbReference>
<dbReference type="GO" id="GO:0051082">
    <property type="term" value="F:unfolded protein binding"/>
    <property type="evidence" value="ECO:0007669"/>
    <property type="project" value="InterPro"/>
</dbReference>
<dbReference type="CDD" id="cd10234">
    <property type="entry name" value="ASKHA_NBD_HSP70_DnaK-like"/>
    <property type="match status" value="1"/>
</dbReference>
<dbReference type="FunFam" id="2.60.34.10:FF:000014">
    <property type="entry name" value="Chaperone protein DnaK HSP70"/>
    <property type="match status" value="1"/>
</dbReference>
<dbReference type="FunFam" id="1.20.1270.10:FF:000001">
    <property type="entry name" value="Molecular chaperone DnaK"/>
    <property type="match status" value="1"/>
</dbReference>
<dbReference type="FunFam" id="3.30.420.40:FF:000071">
    <property type="entry name" value="Molecular chaperone DnaK"/>
    <property type="match status" value="1"/>
</dbReference>
<dbReference type="FunFam" id="3.90.640.10:FF:000003">
    <property type="entry name" value="Molecular chaperone DnaK"/>
    <property type="match status" value="1"/>
</dbReference>
<dbReference type="Gene3D" id="1.20.1270.10">
    <property type="match status" value="1"/>
</dbReference>
<dbReference type="Gene3D" id="3.30.420.40">
    <property type="match status" value="2"/>
</dbReference>
<dbReference type="Gene3D" id="3.90.640.10">
    <property type="entry name" value="Actin, Chain A, domain 4"/>
    <property type="match status" value="1"/>
</dbReference>
<dbReference type="Gene3D" id="2.60.34.10">
    <property type="entry name" value="Substrate Binding Domain Of DNAk, Chain A, domain 1"/>
    <property type="match status" value="1"/>
</dbReference>
<dbReference type="HAMAP" id="MF_00332">
    <property type="entry name" value="DnaK"/>
    <property type="match status" value="1"/>
</dbReference>
<dbReference type="InterPro" id="IPR043129">
    <property type="entry name" value="ATPase_NBD"/>
</dbReference>
<dbReference type="InterPro" id="IPR012725">
    <property type="entry name" value="Chaperone_DnaK"/>
</dbReference>
<dbReference type="InterPro" id="IPR018181">
    <property type="entry name" value="Heat_shock_70_CS"/>
</dbReference>
<dbReference type="InterPro" id="IPR029048">
    <property type="entry name" value="HSP70_C_sf"/>
</dbReference>
<dbReference type="InterPro" id="IPR029047">
    <property type="entry name" value="HSP70_peptide-bd_sf"/>
</dbReference>
<dbReference type="InterPro" id="IPR013126">
    <property type="entry name" value="Hsp_70_fam"/>
</dbReference>
<dbReference type="NCBIfam" id="NF001413">
    <property type="entry name" value="PRK00290.1"/>
    <property type="match status" value="1"/>
</dbReference>
<dbReference type="NCBIfam" id="TIGR02350">
    <property type="entry name" value="prok_dnaK"/>
    <property type="match status" value="1"/>
</dbReference>
<dbReference type="PANTHER" id="PTHR19375">
    <property type="entry name" value="HEAT SHOCK PROTEIN 70KDA"/>
    <property type="match status" value="1"/>
</dbReference>
<dbReference type="Pfam" id="PF00012">
    <property type="entry name" value="HSP70"/>
    <property type="match status" value="2"/>
</dbReference>
<dbReference type="PRINTS" id="PR00301">
    <property type="entry name" value="HEATSHOCK70"/>
</dbReference>
<dbReference type="SUPFAM" id="SSF53067">
    <property type="entry name" value="Actin-like ATPase domain"/>
    <property type="match status" value="2"/>
</dbReference>
<dbReference type="SUPFAM" id="SSF100934">
    <property type="entry name" value="Heat shock protein 70kD (HSP70), C-terminal subdomain"/>
    <property type="match status" value="1"/>
</dbReference>
<dbReference type="SUPFAM" id="SSF100920">
    <property type="entry name" value="Heat shock protein 70kD (HSP70), peptide-binding domain"/>
    <property type="match status" value="1"/>
</dbReference>
<dbReference type="PROSITE" id="PS00297">
    <property type="entry name" value="HSP70_1"/>
    <property type="match status" value="1"/>
</dbReference>
<dbReference type="PROSITE" id="PS00329">
    <property type="entry name" value="HSP70_2"/>
    <property type="match status" value="1"/>
</dbReference>
<dbReference type="PROSITE" id="PS01036">
    <property type="entry name" value="HSP70_3"/>
    <property type="match status" value="1"/>
</dbReference>
<evidence type="ECO:0000255" key="1">
    <source>
        <dbReference type="HAMAP-Rule" id="MF_00332"/>
    </source>
</evidence>
<evidence type="ECO:0000256" key="2">
    <source>
        <dbReference type="SAM" id="MobiDB-lite"/>
    </source>
</evidence>
<protein>
    <recommendedName>
        <fullName evidence="1">Chaperone protein DnaK</fullName>
    </recommendedName>
    <alternativeName>
        <fullName evidence="1">HSP70</fullName>
    </alternativeName>
    <alternativeName>
        <fullName evidence="1">Heat shock 70 kDa protein</fullName>
    </alternativeName>
    <alternativeName>
        <fullName evidence="1">Heat shock protein 70</fullName>
    </alternativeName>
</protein>
<feature type="chain" id="PRO_1000119759" description="Chaperone protein DnaK">
    <location>
        <begin position="1"/>
        <end position="617"/>
    </location>
</feature>
<feature type="region of interest" description="Disordered" evidence="2">
    <location>
        <begin position="489"/>
        <end position="512"/>
    </location>
</feature>
<feature type="region of interest" description="Disordered" evidence="2">
    <location>
        <begin position="579"/>
        <end position="617"/>
    </location>
</feature>
<feature type="compositionally biased region" description="Basic and acidic residues" evidence="2">
    <location>
        <begin position="489"/>
        <end position="505"/>
    </location>
</feature>
<feature type="compositionally biased region" description="Low complexity" evidence="2">
    <location>
        <begin position="579"/>
        <end position="593"/>
    </location>
</feature>
<feature type="compositionally biased region" description="Acidic residues" evidence="2">
    <location>
        <begin position="599"/>
        <end position="609"/>
    </location>
</feature>
<feature type="modified residue" description="Phosphothreonine; by autocatalysis" evidence="1">
    <location>
        <position position="173"/>
    </location>
</feature>
<name>DNAK_STRGG</name>
<reference key="1">
    <citation type="journal article" date="2008" name="J. Bacteriol.">
        <title>Genome sequence of the streptomycin-producing microorganism Streptomyces griseus IFO 13350.</title>
        <authorList>
            <person name="Ohnishi Y."/>
            <person name="Ishikawa J."/>
            <person name="Hara H."/>
            <person name="Suzuki H."/>
            <person name="Ikenoya M."/>
            <person name="Ikeda H."/>
            <person name="Yamashita A."/>
            <person name="Hattori M."/>
            <person name="Horinouchi S."/>
        </authorList>
    </citation>
    <scope>NUCLEOTIDE SEQUENCE [LARGE SCALE GENOMIC DNA]</scope>
    <source>
        <strain>JCM 4626 / CBS 651.72 / NBRC 13350 / KCC S-0626 / ISP 5235</strain>
    </source>
</reference>
<gene>
    <name evidence="1" type="primary">dnaK</name>
    <name type="ordered locus">SGR_3434</name>
</gene>
<sequence>MARAVGIDLGTTNSVVSVLEGGEPTVITNAEGARTTPSVVAFAKNGEVLVGEVAKRQAVTNVDRTIRSVKRHMGTDWKIDLDGKSFNPQQMSAFILQKLKRDAESYLGEKVTDAVITVPAYFNDSERQATKEAGEIAGLNVLRIVNEPTAAALAYGLDKDDQTILVFDLGGGTFDVSLLEIGDGVVEVKATNGDNHLGGDDWDQRVVDYLVKQFANGHGVDLSKDKMALQRLREAAEKAKIELSSSTETTINLPYITASAEGPLHLDEKLTRSQFQQLTADLLDRCKTPFHNVIKDAGIQLSEIDHVVLVGGSTRMPAVAELVKELTGGQEANKGVNPDEVVAIGASLQAGVLKGEVKDVLLLDVTPLSLGIETKGGIMTKLIERNTTIPTKRSEIFTTAEDNQPSVQIQVYQGEREIAAYNKKLGMFELTGLPPAPRGVPQIEVAFDIDANGIMHVAAKDLGTGKEQKMTVTGGSSLPKDEVNRMREEAEKYAEEDHARREAAESRNQGEQLVYQTEKFLKDNEDKVPADVKTEVETAVGELKEKLKGEDSAEIRTATEKVAAVSQKLGQAMYANAQAEGAAPGADAPGDAQAKADDDVVDAEIVDDEKDTKGGAA</sequence>
<keyword id="KW-0067">ATP-binding</keyword>
<keyword id="KW-0143">Chaperone</keyword>
<keyword id="KW-0547">Nucleotide-binding</keyword>
<keyword id="KW-0597">Phosphoprotein</keyword>
<keyword id="KW-0346">Stress response</keyword>
<comment type="function">
    <text evidence="1">Acts as a chaperone.</text>
</comment>
<comment type="induction">
    <text evidence="1">By stress conditions e.g. heat shock.</text>
</comment>
<comment type="similarity">
    <text evidence="1">Belongs to the heat shock protein 70 family.</text>
</comment>
<accession>B1VMF3</accession>
<proteinExistence type="inferred from homology"/>